<keyword id="KW-0489">Methyltransferase</keyword>
<keyword id="KW-0949">S-adenosyl-L-methionine</keyword>
<keyword id="KW-0808">Transferase</keyword>
<keyword id="KW-0831">Ubiquinone biosynthesis</keyword>
<gene>
    <name evidence="1" type="primary">ubiG</name>
    <name type="ordered locus">Bcep1808_0959</name>
</gene>
<organism>
    <name type="scientific">Burkholderia vietnamiensis (strain G4 / LMG 22486)</name>
    <name type="common">Burkholderia cepacia (strain R1808)</name>
    <dbReference type="NCBI Taxonomy" id="269482"/>
    <lineage>
        <taxon>Bacteria</taxon>
        <taxon>Pseudomonadati</taxon>
        <taxon>Pseudomonadota</taxon>
        <taxon>Betaproteobacteria</taxon>
        <taxon>Burkholderiales</taxon>
        <taxon>Burkholderiaceae</taxon>
        <taxon>Burkholderia</taxon>
        <taxon>Burkholderia cepacia complex</taxon>
    </lineage>
</organism>
<protein>
    <recommendedName>
        <fullName evidence="1">Ubiquinone biosynthesis O-methyltransferase</fullName>
    </recommendedName>
    <alternativeName>
        <fullName evidence="1">2-polyprenyl-6-hydroxyphenol methylase</fullName>
        <ecNumber evidence="1">2.1.1.222</ecNumber>
    </alternativeName>
    <alternativeName>
        <fullName evidence="1">3-demethylubiquinone 3-O-methyltransferase</fullName>
        <ecNumber evidence="1">2.1.1.64</ecNumber>
    </alternativeName>
</protein>
<reference key="1">
    <citation type="submission" date="2007-03" db="EMBL/GenBank/DDBJ databases">
        <title>Complete sequence of chromosome 1 of Burkholderia vietnamiensis G4.</title>
        <authorList>
            <consortium name="US DOE Joint Genome Institute"/>
            <person name="Copeland A."/>
            <person name="Lucas S."/>
            <person name="Lapidus A."/>
            <person name="Barry K."/>
            <person name="Detter J.C."/>
            <person name="Glavina del Rio T."/>
            <person name="Hammon N."/>
            <person name="Israni S."/>
            <person name="Dalin E."/>
            <person name="Tice H."/>
            <person name="Pitluck S."/>
            <person name="Chain P."/>
            <person name="Malfatti S."/>
            <person name="Shin M."/>
            <person name="Vergez L."/>
            <person name="Schmutz J."/>
            <person name="Larimer F."/>
            <person name="Land M."/>
            <person name="Hauser L."/>
            <person name="Kyrpides N."/>
            <person name="Tiedje J."/>
            <person name="Richardson P."/>
        </authorList>
    </citation>
    <scope>NUCLEOTIDE SEQUENCE [LARGE SCALE GENOMIC DNA]</scope>
    <source>
        <strain>G4 / LMG 22486</strain>
    </source>
</reference>
<dbReference type="EC" id="2.1.1.222" evidence="1"/>
<dbReference type="EC" id="2.1.1.64" evidence="1"/>
<dbReference type="EMBL" id="CP000614">
    <property type="protein sequence ID" value="ABO53970.1"/>
    <property type="molecule type" value="Genomic_DNA"/>
</dbReference>
<dbReference type="SMR" id="A4JCG7"/>
<dbReference type="KEGG" id="bvi:Bcep1808_0959"/>
<dbReference type="eggNOG" id="COG2227">
    <property type="taxonomic scope" value="Bacteria"/>
</dbReference>
<dbReference type="HOGENOM" id="CLU_042432_5_0_4"/>
<dbReference type="UniPathway" id="UPA00232"/>
<dbReference type="Proteomes" id="UP000002287">
    <property type="component" value="Chromosome 1"/>
</dbReference>
<dbReference type="GO" id="GO:0102208">
    <property type="term" value="F:2-polyprenyl-6-hydroxyphenol methylase activity"/>
    <property type="evidence" value="ECO:0007669"/>
    <property type="project" value="UniProtKB-EC"/>
</dbReference>
<dbReference type="GO" id="GO:0061542">
    <property type="term" value="F:3-demethylubiquinol 3-O-methyltransferase activity"/>
    <property type="evidence" value="ECO:0007669"/>
    <property type="project" value="UniProtKB-UniRule"/>
</dbReference>
<dbReference type="GO" id="GO:0010420">
    <property type="term" value="F:polyprenyldihydroxybenzoate methyltransferase activity"/>
    <property type="evidence" value="ECO:0007669"/>
    <property type="project" value="InterPro"/>
</dbReference>
<dbReference type="GO" id="GO:0032259">
    <property type="term" value="P:methylation"/>
    <property type="evidence" value="ECO:0007669"/>
    <property type="project" value="UniProtKB-KW"/>
</dbReference>
<dbReference type="CDD" id="cd02440">
    <property type="entry name" value="AdoMet_MTases"/>
    <property type="match status" value="1"/>
</dbReference>
<dbReference type="FunFam" id="3.40.50.150:FF:000028">
    <property type="entry name" value="Ubiquinone biosynthesis O-methyltransferase"/>
    <property type="match status" value="1"/>
</dbReference>
<dbReference type="Gene3D" id="3.40.50.150">
    <property type="entry name" value="Vaccinia Virus protein VP39"/>
    <property type="match status" value="1"/>
</dbReference>
<dbReference type="HAMAP" id="MF_00472">
    <property type="entry name" value="UbiG"/>
    <property type="match status" value="1"/>
</dbReference>
<dbReference type="InterPro" id="IPR029063">
    <property type="entry name" value="SAM-dependent_MTases_sf"/>
</dbReference>
<dbReference type="InterPro" id="IPR010233">
    <property type="entry name" value="UbiG_MeTrfase"/>
</dbReference>
<dbReference type="NCBIfam" id="TIGR01983">
    <property type="entry name" value="UbiG"/>
    <property type="match status" value="1"/>
</dbReference>
<dbReference type="PANTHER" id="PTHR43464">
    <property type="entry name" value="METHYLTRANSFERASE"/>
    <property type="match status" value="1"/>
</dbReference>
<dbReference type="PANTHER" id="PTHR43464:SF19">
    <property type="entry name" value="UBIQUINONE BIOSYNTHESIS O-METHYLTRANSFERASE, MITOCHONDRIAL"/>
    <property type="match status" value="1"/>
</dbReference>
<dbReference type="Pfam" id="PF13489">
    <property type="entry name" value="Methyltransf_23"/>
    <property type="match status" value="1"/>
</dbReference>
<dbReference type="SUPFAM" id="SSF53335">
    <property type="entry name" value="S-adenosyl-L-methionine-dependent methyltransferases"/>
    <property type="match status" value="1"/>
</dbReference>
<feature type="chain" id="PRO_1000013896" description="Ubiquinone biosynthesis O-methyltransferase">
    <location>
        <begin position="1"/>
        <end position="232"/>
    </location>
</feature>
<feature type="binding site" evidence="1">
    <location>
        <position position="36"/>
    </location>
    <ligand>
        <name>S-adenosyl-L-methionine</name>
        <dbReference type="ChEBI" id="CHEBI:59789"/>
    </ligand>
</feature>
<feature type="binding site" evidence="1">
    <location>
        <position position="55"/>
    </location>
    <ligand>
        <name>S-adenosyl-L-methionine</name>
        <dbReference type="ChEBI" id="CHEBI:59789"/>
    </ligand>
</feature>
<feature type="binding site" evidence="1">
    <location>
        <position position="76"/>
    </location>
    <ligand>
        <name>S-adenosyl-L-methionine</name>
        <dbReference type="ChEBI" id="CHEBI:59789"/>
    </ligand>
</feature>
<feature type="binding site" evidence="1">
    <location>
        <position position="120"/>
    </location>
    <ligand>
        <name>S-adenosyl-L-methionine</name>
        <dbReference type="ChEBI" id="CHEBI:59789"/>
    </ligand>
</feature>
<sequence>MTNADPHELQKFSDLAHRWWDPNAEFKPLHDLNPVRLGWIDSHAHLAGKRALDIGCGGGILSESMAGLGAQVKGIDLSNEALGVADLHSLESGITVDYEAIAAEAIAEREPGSYDVVTCMEMLEHVPSPAGVVSACAKLVKPGGWVFFSTLNRNLKSYLFAVIGAEYIAQMLPKGTHDYARFIRPSELAGFVRATDLHIVELKGITYHPIGKRFALSNDTDINYLVACRRGA</sequence>
<accession>A4JCG7</accession>
<comment type="function">
    <text evidence="1">O-methyltransferase that catalyzes the 2 O-methylation steps in the ubiquinone biosynthetic pathway.</text>
</comment>
<comment type="catalytic activity">
    <reaction evidence="1">
        <text>a 3-demethylubiquinol + S-adenosyl-L-methionine = a ubiquinol + S-adenosyl-L-homocysteine + H(+)</text>
        <dbReference type="Rhea" id="RHEA:44380"/>
        <dbReference type="Rhea" id="RHEA-COMP:9566"/>
        <dbReference type="Rhea" id="RHEA-COMP:10914"/>
        <dbReference type="ChEBI" id="CHEBI:15378"/>
        <dbReference type="ChEBI" id="CHEBI:17976"/>
        <dbReference type="ChEBI" id="CHEBI:57856"/>
        <dbReference type="ChEBI" id="CHEBI:59789"/>
        <dbReference type="ChEBI" id="CHEBI:84422"/>
        <dbReference type="EC" id="2.1.1.64"/>
    </reaction>
</comment>
<comment type="catalytic activity">
    <reaction evidence="1">
        <text>a 3-(all-trans-polyprenyl)benzene-1,2-diol + S-adenosyl-L-methionine = a 2-methoxy-6-(all-trans-polyprenyl)phenol + S-adenosyl-L-homocysteine + H(+)</text>
        <dbReference type="Rhea" id="RHEA:31411"/>
        <dbReference type="Rhea" id="RHEA-COMP:9550"/>
        <dbReference type="Rhea" id="RHEA-COMP:9551"/>
        <dbReference type="ChEBI" id="CHEBI:15378"/>
        <dbReference type="ChEBI" id="CHEBI:57856"/>
        <dbReference type="ChEBI" id="CHEBI:59789"/>
        <dbReference type="ChEBI" id="CHEBI:62729"/>
        <dbReference type="ChEBI" id="CHEBI:62731"/>
        <dbReference type="EC" id="2.1.1.222"/>
    </reaction>
</comment>
<comment type="pathway">
    <text evidence="1">Cofactor biosynthesis; ubiquinone biosynthesis.</text>
</comment>
<comment type="similarity">
    <text evidence="1">Belongs to the methyltransferase superfamily. UbiG/COQ3 family.</text>
</comment>
<evidence type="ECO:0000255" key="1">
    <source>
        <dbReference type="HAMAP-Rule" id="MF_00472"/>
    </source>
</evidence>
<proteinExistence type="inferred from homology"/>
<name>UBIG_BURVG</name>